<organism>
    <name type="scientific">Xylella fastidiosa (strain Temecula1 / ATCC 700964)</name>
    <dbReference type="NCBI Taxonomy" id="183190"/>
    <lineage>
        <taxon>Bacteria</taxon>
        <taxon>Pseudomonadati</taxon>
        <taxon>Pseudomonadota</taxon>
        <taxon>Gammaproteobacteria</taxon>
        <taxon>Lysobacterales</taxon>
        <taxon>Lysobacteraceae</taxon>
        <taxon>Xylella</taxon>
    </lineage>
</organism>
<keyword id="KW-0067">ATP-binding</keyword>
<keyword id="KW-0963">Cytoplasm</keyword>
<keyword id="KW-0418">Kinase</keyword>
<keyword id="KW-0547">Nucleotide-binding</keyword>
<keyword id="KW-1185">Reference proteome</keyword>
<keyword id="KW-0808">Transferase</keyword>
<proteinExistence type="inferred from homology"/>
<protein>
    <recommendedName>
        <fullName evidence="1">Cytidylate kinase</fullName>
        <shortName evidence="1">CK</shortName>
        <ecNumber evidence="1">2.7.4.25</ecNumber>
    </recommendedName>
    <alternativeName>
        <fullName evidence="1">Cytidine monophosphate kinase</fullName>
        <shortName evidence="1">CMP kinase</shortName>
    </alternativeName>
</protein>
<sequence>MADLVPVLTIDGPSGVGKGTVSKIVAARLGWHYLDSGALYRAVAVAADWAAVDVSDTTALVKCAFDTCVNFAECADGEMRVLVNSIDATDVLRMETTGVLASTIASISEVRATLKKRQQMFRRTPGLVADGRDMGTVIFPDAKYKVFLTAKAEERAQRRYKQLMKKGVSVMFGALLEEIRARDARDACRSVAPLKPADDALLIDSTCMEVDEVVAQVLALVTD</sequence>
<comment type="catalytic activity">
    <reaction evidence="1">
        <text>CMP + ATP = CDP + ADP</text>
        <dbReference type="Rhea" id="RHEA:11600"/>
        <dbReference type="ChEBI" id="CHEBI:30616"/>
        <dbReference type="ChEBI" id="CHEBI:58069"/>
        <dbReference type="ChEBI" id="CHEBI:60377"/>
        <dbReference type="ChEBI" id="CHEBI:456216"/>
        <dbReference type="EC" id="2.7.4.25"/>
    </reaction>
</comment>
<comment type="catalytic activity">
    <reaction evidence="1">
        <text>dCMP + ATP = dCDP + ADP</text>
        <dbReference type="Rhea" id="RHEA:25094"/>
        <dbReference type="ChEBI" id="CHEBI:30616"/>
        <dbReference type="ChEBI" id="CHEBI:57566"/>
        <dbReference type="ChEBI" id="CHEBI:58593"/>
        <dbReference type="ChEBI" id="CHEBI:456216"/>
        <dbReference type="EC" id="2.7.4.25"/>
    </reaction>
</comment>
<comment type="subcellular location">
    <subcellularLocation>
        <location evidence="1">Cytoplasm</location>
    </subcellularLocation>
</comment>
<comment type="similarity">
    <text evidence="1">Belongs to the cytidylate kinase family. Type 1 subfamily.</text>
</comment>
<evidence type="ECO:0000255" key="1">
    <source>
        <dbReference type="HAMAP-Rule" id="MF_00238"/>
    </source>
</evidence>
<dbReference type="EC" id="2.7.4.25" evidence="1"/>
<dbReference type="EMBL" id="AE009442">
    <property type="protein sequence ID" value="AAO29301.1"/>
    <property type="molecule type" value="Genomic_DNA"/>
</dbReference>
<dbReference type="RefSeq" id="WP_004088434.1">
    <property type="nucleotide sequence ID" value="NC_004556.1"/>
</dbReference>
<dbReference type="SMR" id="Q87BJ6"/>
<dbReference type="GeneID" id="93905278"/>
<dbReference type="KEGG" id="xft:PD_1457"/>
<dbReference type="HOGENOM" id="CLU_079959_2_0_6"/>
<dbReference type="Proteomes" id="UP000002516">
    <property type="component" value="Chromosome"/>
</dbReference>
<dbReference type="GO" id="GO:0005737">
    <property type="term" value="C:cytoplasm"/>
    <property type="evidence" value="ECO:0007669"/>
    <property type="project" value="UniProtKB-SubCell"/>
</dbReference>
<dbReference type="GO" id="GO:0005524">
    <property type="term" value="F:ATP binding"/>
    <property type="evidence" value="ECO:0007669"/>
    <property type="project" value="UniProtKB-UniRule"/>
</dbReference>
<dbReference type="GO" id="GO:0036430">
    <property type="term" value="F:CMP kinase activity"/>
    <property type="evidence" value="ECO:0007669"/>
    <property type="project" value="RHEA"/>
</dbReference>
<dbReference type="GO" id="GO:0036431">
    <property type="term" value="F:dCMP kinase activity"/>
    <property type="evidence" value="ECO:0007669"/>
    <property type="project" value="RHEA"/>
</dbReference>
<dbReference type="GO" id="GO:0006220">
    <property type="term" value="P:pyrimidine nucleotide metabolic process"/>
    <property type="evidence" value="ECO:0007669"/>
    <property type="project" value="UniProtKB-UniRule"/>
</dbReference>
<dbReference type="CDD" id="cd02020">
    <property type="entry name" value="CMPK"/>
    <property type="match status" value="1"/>
</dbReference>
<dbReference type="Gene3D" id="3.40.50.300">
    <property type="entry name" value="P-loop containing nucleotide triphosphate hydrolases"/>
    <property type="match status" value="1"/>
</dbReference>
<dbReference type="HAMAP" id="MF_00238">
    <property type="entry name" value="Cytidyl_kinase_type1"/>
    <property type="match status" value="1"/>
</dbReference>
<dbReference type="InterPro" id="IPR003136">
    <property type="entry name" value="Cytidylate_kin"/>
</dbReference>
<dbReference type="InterPro" id="IPR011994">
    <property type="entry name" value="Cytidylate_kinase_dom"/>
</dbReference>
<dbReference type="InterPro" id="IPR027417">
    <property type="entry name" value="P-loop_NTPase"/>
</dbReference>
<dbReference type="NCBIfam" id="TIGR00017">
    <property type="entry name" value="cmk"/>
    <property type="match status" value="1"/>
</dbReference>
<dbReference type="Pfam" id="PF02224">
    <property type="entry name" value="Cytidylate_kin"/>
    <property type="match status" value="1"/>
</dbReference>
<dbReference type="SUPFAM" id="SSF52540">
    <property type="entry name" value="P-loop containing nucleoside triphosphate hydrolases"/>
    <property type="match status" value="1"/>
</dbReference>
<gene>
    <name evidence="1" type="primary">cmk</name>
    <name type="ordered locus">PD_1457</name>
</gene>
<accession>Q87BJ6</accession>
<name>KCY_XYLFT</name>
<reference key="1">
    <citation type="journal article" date="2003" name="J. Bacteriol.">
        <title>Comparative analyses of the complete genome sequences of Pierce's disease and citrus variegated chlorosis strains of Xylella fastidiosa.</title>
        <authorList>
            <person name="Van Sluys M.A."/>
            <person name="de Oliveira M.C."/>
            <person name="Monteiro-Vitorello C.B."/>
            <person name="Miyaki C.Y."/>
            <person name="Furlan L.R."/>
            <person name="Camargo L.E.A."/>
            <person name="da Silva A.C.R."/>
            <person name="Moon D.H."/>
            <person name="Takita M.A."/>
            <person name="Lemos E.G.M."/>
            <person name="Machado M.A."/>
            <person name="Ferro M.I.T."/>
            <person name="da Silva F.R."/>
            <person name="Goldman M.H.S."/>
            <person name="Goldman G.H."/>
            <person name="Lemos M.V.F."/>
            <person name="El-Dorry H."/>
            <person name="Tsai S.M."/>
            <person name="Carrer H."/>
            <person name="Carraro D.M."/>
            <person name="de Oliveira R.C."/>
            <person name="Nunes L.R."/>
            <person name="Siqueira W.J."/>
            <person name="Coutinho L.L."/>
            <person name="Kimura E.T."/>
            <person name="Ferro E.S."/>
            <person name="Harakava R."/>
            <person name="Kuramae E.E."/>
            <person name="Marino C.L."/>
            <person name="Giglioti E."/>
            <person name="Abreu I.L."/>
            <person name="Alves L.M.C."/>
            <person name="do Amaral A.M."/>
            <person name="Baia G.S."/>
            <person name="Blanco S.R."/>
            <person name="Brito M.S."/>
            <person name="Cannavan F.S."/>
            <person name="Celestino A.V."/>
            <person name="da Cunha A.F."/>
            <person name="Fenille R.C."/>
            <person name="Ferro J.A."/>
            <person name="Formighieri E.F."/>
            <person name="Kishi L.T."/>
            <person name="Leoni S.G."/>
            <person name="Oliveira A.R."/>
            <person name="Rosa V.E. Jr."/>
            <person name="Sassaki F.T."/>
            <person name="Sena J.A.D."/>
            <person name="de Souza A.A."/>
            <person name="Truffi D."/>
            <person name="Tsukumo F."/>
            <person name="Yanai G.M."/>
            <person name="Zaros L.G."/>
            <person name="Civerolo E.L."/>
            <person name="Simpson A.J.G."/>
            <person name="Almeida N.F. Jr."/>
            <person name="Setubal J.C."/>
            <person name="Kitajima J.P."/>
        </authorList>
    </citation>
    <scope>NUCLEOTIDE SEQUENCE [LARGE SCALE GENOMIC DNA]</scope>
    <source>
        <strain>Temecula1 / ATCC 700964</strain>
    </source>
</reference>
<feature type="chain" id="PRO_0000132005" description="Cytidylate kinase">
    <location>
        <begin position="1"/>
        <end position="223"/>
    </location>
</feature>
<feature type="binding site" evidence="1">
    <location>
        <begin position="12"/>
        <end position="20"/>
    </location>
    <ligand>
        <name>ATP</name>
        <dbReference type="ChEBI" id="CHEBI:30616"/>
    </ligand>
</feature>